<geneLocation type="chloroplast"/>
<evidence type="ECO:0000255" key="1">
    <source>
        <dbReference type="HAMAP-Rule" id="MF_00643"/>
    </source>
</evidence>
<gene>
    <name evidence="1" type="primary">psbF</name>
</gene>
<name>PSBF_VITVI</name>
<dbReference type="EMBL" id="DQ424856">
    <property type="protein sequence ID" value="ABE47550.1"/>
    <property type="molecule type" value="Genomic_DNA"/>
</dbReference>
<dbReference type="RefSeq" id="YP_567092.1">
    <property type="nucleotide sequence ID" value="NC_007957.1"/>
</dbReference>
<dbReference type="SMR" id="Q0ZJ04"/>
<dbReference type="FunCoup" id="Q0ZJ04">
    <property type="interactions" value="60"/>
</dbReference>
<dbReference type="STRING" id="29760.Q0ZJ04"/>
<dbReference type="GeneID" id="4025053"/>
<dbReference type="KEGG" id="vvi:4025053"/>
<dbReference type="InParanoid" id="Q0ZJ04"/>
<dbReference type="OrthoDB" id="438036at71240"/>
<dbReference type="Proteomes" id="UP000009183">
    <property type="component" value="Chloroplast"/>
</dbReference>
<dbReference type="GO" id="GO:0009535">
    <property type="term" value="C:chloroplast thylakoid membrane"/>
    <property type="evidence" value="ECO:0007669"/>
    <property type="project" value="UniProtKB-SubCell"/>
</dbReference>
<dbReference type="GO" id="GO:0009539">
    <property type="term" value="C:photosystem II reaction center"/>
    <property type="evidence" value="ECO:0007669"/>
    <property type="project" value="InterPro"/>
</dbReference>
<dbReference type="GO" id="GO:0009055">
    <property type="term" value="F:electron transfer activity"/>
    <property type="evidence" value="ECO:0007669"/>
    <property type="project" value="UniProtKB-UniRule"/>
</dbReference>
<dbReference type="GO" id="GO:0020037">
    <property type="term" value="F:heme binding"/>
    <property type="evidence" value="ECO:0007669"/>
    <property type="project" value="InterPro"/>
</dbReference>
<dbReference type="GO" id="GO:0005506">
    <property type="term" value="F:iron ion binding"/>
    <property type="evidence" value="ECO:0007669"/>
    <property type="project" value="UniProtKB-UniRule"/>
</dbReference>
<dbReference type="GO" id="GO:0009767">
    <property type="term" value="P:photosynthetic electron transport chain"/>
    <property type="evidence" value="ECO:0007669"/>
    <property type="project" value="InterPro"/>
</dbReference>
<dbReference type="HAMAP" id="MF_00643">
    <property type="entry name" value="PSII_PsbF"/>
    <property type="match status" value="1"/>
</dbReference>
<dbReference type="InterPro" id="IPR006241">
    <property type="entry name" value="PSII_cyt_b559_bsu"/>
</dbReference>
<dbReference type="InterPro" id="IPR006216">
    <property type="entry name" value="PSII_cyt_b559_CS"/>
</dbReference>
<dbReference type="InterPro" id="IPR013081">
    <property type="entry name" value="PSII_cyt_b559_N"/>
</dbReference>
<dbReference type="NCBIfam" id="TIGR01333">
    <property type="entry name" value="cyt_b559_beta"/>
    <property type="match status" value="1"/>
</dbReference>
<dbReference type="Pfam" id="PF00283">
    <property type="entry name" value="Cytochrom_B559"/>
    <property type="match status" value="1"/>
</dbReference>
<dbReference type="PIRSF" id="PIRSF000037">
    <property type="entry name" value="PsbF"/>
    <property type="match status" value="1"/>
</dbReference>
<dbReference type="SUPFAM" id="SSF161045">
    <property type="entry name" value="Cytochrome b559 subunits"/>
    <property type="match status" value="1"/>
</dbReference>
<dbReference type="PROSITE" id="PS00537">
    <property type="entry name" value="CYTOCHROME_B559"/>
    <property type="match status" value="1"/>
</dbReference>
<proteinExistence type="inferred from homology"/>
<feature type="chain" id="PRO_0000275742" description="Cytochrome b559 subunit beta">
    <location>
        <begin position="1"/>
        <end position="39"/>
    </location>
</feature>
<feature type="transmembrane region" description="Helical" evidence="1">
    <location>
        <begin position="14"/>
        <end position="30"/>
    </location>
</feature>
<feature type="binding site" description="axial binding residue" evidence="1">
    <location>
        <position position="18"/>
    </location>
    <ligand>
        <name>heme</name>
        <dbReference type="ChEBI" id="CHEBI:30413"/>
        <note>ligand shared with alpha subunit</note>
    </ligand>
    <ligandPart>
        <name>Fe</name>
        <dbReference type="ChEBI" id="CHEBI:18248"/>
    </ligandPart>
</feature>
<accession>Q0ZJ04</accession>
<keyword id="KW-0150">Chloroplast</keyword>
<keyword id="KW-0249">Electron transport</keyword>
<keyword id="KW-0349">Heme</keyword>
<keyword id="KW-0408">Iron</keyword>
<keyword id="KW-0472">Membrane</keyword>
<keyword id="KW-0479">Metal-binding</keyword>
<keyword id="KW-0602">Photosynthesis</keyword>
<keyword id="KW-0604">Photosystem II</keyword>
<keyword id="KW-0934">Plastid</keyword>
<keyword id="KW-1185">Reference proteome</keyword>
<keyword id="KW-0793">Thylakoid</keyword>
<keyword id="KW-0812">Transmembrane</keyword>
<keyword id="KW-1133">Transmembrane helix</keyword>
<keyword id="KW-0813">Transport</keyword>
<organism>
    <name type="scientific">Vitis vinifera</name>
    <name type="common">Grape</name>
    <dbReference type="NCBI Taxonomy" id="29760"/>
    <lineage>
        <taxon>Eukaryota</taxon>
        <taxon>Viridiplantae</taxon>
        <taxon>Streptophyta</taxon>
        <taxon>Embryophyta</taxon>
        <taxon>Tracheophyta</taxon>
        <taxon>Spermatophyta</taxon>
        <taxon>Magnoliopsida</taxon>
        <taxon>eudicotyledons</taxon>
        <taxon>Gunneridae</taxon>
        <taxon>Pentapetalae</taxon>
        <taxon>rosids</taxon>
        <taxon>Vitales</taxon>
        <taxon>Vitaceae</taxon>
        <taxon>Viteae</taxon>
        <taxon>Vitis</taxon>
    </lineage>
</organism>
<comment type="function">
    <text evidence="1">This b-type cytochrome is tightly associated with the reaction center of photosystem II (PSII). PSII is a light-driven water:plastoquinone oxidoreductase that uses light energy to abstract electrons from H(2)O, generating O(2) and a proton gradient subsequently used for ATP formation. It consists of a core antenna complex that captures photons, and an electron transfer chain that converts photonic excitation into a charge separation.</text>
</comment>
<comment type="cofactor">
    <cofactor evidence="1">
        <name>heme b</name>
        <dbReference type="ChEBI" id="CHEBI:60344"/>
    </cofactor>
    <text evidence="1">With its partner (PsbE) binds heme. PSII binds additional chlorophylls, carotenoids and specific lipids.</text>
</comment>
<comment type="subunit">
    <text evidence="1">Heterodimer of an alpha subunit and a beta subunit. PSII is composed of 1 copy each of membrane proteins PsbA, PsbB, PsbC, PsbD, PsbE, PsbF, PsbH, PsbI, PsbJ, PsbK, PsbL, PsbM, PsbT, PsbX, PsbY, PsbZ, Psb30/Ycf12, at least 3 peripheral proteins of the oxygen-evolving complex and a large number of cofactors. It forms dimeric complexes.</text>
</comment>
<comment type="subcellular location">
    <subcellularLocation>
        <location evidence="1">Plastid</location>
        <location evidence="1">Chloroplast thylakoid membrane</location>
        <topology evidence="1">Single-pass membrane protein</topology>
    </subcellularLocation>
</comment>
<comment type="similarity">
    <text evidence="1">Belongs to the PsbE/PsbF family.</text>
</comment>
<sequence length="39" mass="4424">MTIDRTYPIFTVRWLAVHGLAVPTVSFLGSISAMQFIQR</sequence>
<reference key="1">
    <citation type="journal article" date="2006" name="BMC Evol. Biol.">
        <title>Phylogenetic analyses of Vitis (Vitaceae) based on complete chloroplast genome sequences: effects of taxon sampling and phylogenetic methods on resolving relationships among rosids.</title>
        <authorList>
            <person name="Jansen R.K."/>
            <person name="Kaittanis C."/>
            <person name="Lee S.-B."/>
            <person name="Saski C."/>
            <person name="Tomkins J."/>
            <person name="Alverson A.J."/>
            <person name="Daniell H."/>
        </authorList>
    </citation>
    <scope>NUCLEOTIDE SEQUENCE [LARGE SCALE GENOMIC DNA]</scope>
    <source>
        <strain>cv. Maxxa</strain>
    </source>
</reference>
<protein>
    <recommendedName>
        <fullName evidence="1">Cytochrome b559 subunit beta</fullName>
    </recommendedName>
    <alternativeName>
        <fullName evidence="1">PSII reaction center subunit VI</fullName>
    </alternativeName>
</protein>